<protein>
    <recommendedName>
        <fullName>Calcium-transporting ATPase 1</fullName>
        <ecNumber>7.2.2.10</ecNumber>
    </recommendedName>
    <alternativeName>
        <fullName>Bypass SOD defects protein 1</fullName>
    </alternativeName>
    <alternativeName>
        <fullName>Golgi Ca(2+)-ATPase</fullName>
    </alternativeName>
</protein>
<name>ATC1_YEAST</name>
<gene>
    <name type="primary">PMR1</name>
    <name type="synonym">BSD1</name>
    <name type="synonym">SCC1</name>
    <name type="ordered locus">YGL167C</name>
    <name type="ORF">G1666</name>
</gene>
<keyword id="KW-0007">Acetylation</keyword>
<keyword id="KW-0067">ATP-binding</keyword>
<keyword id="KW-0106">Calcium</keyword>
<keyword id="KW-0109">Calcium transport</keyword>
<keyword id="KW-0333">Golgi apparatus</keyword>
<keyword id="KW-0406">Ion transport</keyword>
<keyword id="KW-0460">Magnesium</keyword>
<keyword id="KW-0472">Membrane</keyword>
<keyword id="KW-0547">Nucleotide-binding</keyword>
<keyword id="KW-0597">Phosphoprotein</keyword>
<keyword id="KW-1185">Reference proteome</keyword>
<keyword id="KW-1278">Translocase</keyword>
<keyword id="KW-0812">Transmembrane</keyword>
<keyword id="KW-1133">Transmembrane helix</keyword>
<keyword id="KW-0813">Transport</keyword>
<feature type="initiator methionine" description="Removed" evidence="6">
    <location>
        <position position="1"/>
    </location>
</feature>
<feature type="chain" id="PRO_0000046231" description="Calcium-transporting ATPase 1">
    <location>
        <begin position="2"/>
        <end position="950"/>
    </location>
</feature>
<feature type="topological domain" description="Cytoplasmic" evidence="2">
    <location>
        <begin position="2"/>
        <end position="92"/>
    </location>
</feature>
<feature type="transmembrane region" description="Helical" evidence="2">
    <location>
        <begin position="93"/>
        <end position="111"/>
    </location>
</feature>
<feature type="topological domain" description="Lumenal" evidence="2">
    <location>
        <begin position="112"/>
        <end position="116"/>
    </location>
</feature>
<feature type="transmembrane region" description="Helical" evidence="2">
    <location>
        <begin position="117"/>
        <end position="133"/>
    </location>
</feature>
<feature type="topological domain" description="Cytoplasmic" evidence="2">
    <location>
        <begin position="134"/>
        <end position="288"/>
    </location>
</feature>
<feature type="transmembrane region" description="Helical" evidence="2">
    <location>
        <begin position="289"/>
        <end position="309"/>
    </location>
</feature>
<feature type="topological domain" description="Lumenal" evidence="2">
    <location>
        <begin position="310"/>
        <end position="323"/>
    </location>
</feature>
<feature type="transmembrane region" description="Helical" evidence="2">
    <location>
        <begin position="324"/>
        <end position="344"/>
    </location>
</feature>
<feature type="topological domain" description="Cytoplasmic" evidence="2">
    <location>
        <begin position="345"/>
        <end position="814"/>
    </location>
</feature>
<feature type="transmembrane region" description="Helical" evidence="2">
    <location>
        <begin position="815"/>
        <end position="835"/>
    </location>
</feature>
<feature type="topological domain" description="Lumenal" evidence="2">
    <location>
        <begin position="836"/>
        <end position="844"/>
    </location>
</feature>
<feature type="transmembrane region" description="Helical" evidence="2">
    <location>
        <begin position="845"/>
        <end position="862"/>
    </location>
</feature>
<feature type="topological domain" description="Cytoplasmic" evidence="2">
    <location>
        <begin position="863"/>
        <end position="884"/>
    </location>
</feature>
<feature type="transmembrane region" description="Helical" evidence="2">
    <location>
        <begin position="885"/>
        <end position="905"/>
    </location>
</feature>
<feature type="topological domain" description="Lumenal" evidence="2">
    <location>
        <begin position="906"/>
        <end position="909"/>
    </location>
</feature>
<feature type="transmembrane region" description="Helical" evidence="2">
    <location>
        <begin position="910"/>
        <end position="930"/>
    </location>
</feature>
<feature type="topological domain" description="Cytoplasmic" evidence="2">
    <location>
        <begin position="931"/>
        <end position="950"/>
    </location>
</feature>
<feature type="active site" description="4-aspartylphosphate intermediate" evidence="1">
    <location>
        <position position="371"/>
    </location>
</feature>
<feature type="modified residue" description="N-acetylserine" evidence="6">
    <location>
        <position position="2"/>
    </location>
</feature>
<feature type="modified residue" description="Phosphoserine" evidence="5">
    <location>
        <position position="227"/>
    </location>
</feature>
<sequence>MSDNPFNASLLDEDSNREREILDATAEALSKPSPSLEYCTLSVDEALEKLDTDKNGGLRSSNEANNRRSLYGPNEITVEDDESLFKKFLSNFIEDRMILLLIGSAVVSLFMGNIDDAVSITLAIFIVVTVGFVQEYRSEKSLEALNKLVPAECHLMRCGQESHVLASTLVPGDLVHFRIGDRIPADIRIIEAIDLSIDESNLTGENEPVHKTSQTIEKSSFNDQPNSIVPISERSCIAYMGTLVKEGHGKGIVVGTGTNTSFGAVFEMMNNIEKPKTPLQLTMDKLGKDLSLVSFIVIGMICLVGIIQGRSWLEMFQISVSLAVAAIPEGLPIIVTVTLALGVLRMAKRKAIVRRLPSVETLGSVNVICSDKTGTLTSNHMTVSKLWCLDSMSNKLNVLSLDKNKKTKNSNGNLKNYLTEDVRETLTIGNLCNNASFSQEHAIFLGNPTDVALLEQLANFEMPDIRNTVQKVQELPFNSKRKLMATKILNPVDNKCTVYVKGAFERILEYSTSYLKSKGKKTEKLTEAQKATINECANSMASEGLRVFGFAKLTLSDSSTPLTEDLIKDLTFTGLIGMNDPPRPNVKFAIEQLLQGGVHIIMITGDSENTAVNIAKQIGIPVIDPKLSVLSGDKLDEMSDDQLANVIDHVNIFARATPEHKLNIVRALRKRGDVVAMTGDGVNDAPALKLSDIGVSMGRIGTDVAKEASDMVLTDDDFSTILTAIEEGKGIFNNIQNFLTFQLSTSVAALSLVALSTAFKLPNPLNAMQILWINILMDGPPAQSLGVEPVDHEVMKKPPRKRTDKILTHDVMKRLLTTAACIIVGTVYIFVKEMAEDGKVTARDTTMTFTCFVFFDMFNALACRHNTKSIFEIGFFTNKMFNYAVGLSLLGQMCAIYIPFFQSIFKTEKLGISDILLLLLISSSVFIVDELRKLWTRKKNEEDSTYFSNV</sequence>
<organism>
    <name type="scientific">Saccharomyces cerevisiae (strain ATCC 204508 / S288c)</name>
    <name type="common">Baker's yeast</name>
    <dbReference type="NCBI Taxonomy" id="559292"/>
    <lineage>
        <taxon>Eukaryota</taxon>
        <taxon>Fungi</taxon>
        <taxon>Dikarya</taxon>
        <taxon>Ascomycota</taxon>
        <taxon>Saccharomycotina</taxon>
        <taxon>Saccharomycetes</taxon>
        <taxon>Saccharomycetales</taxon>
        <taxon>Saccharomycetaceae</taxon>
        <taxon>Saccharomyces</taxon>
    </lineage>
</organism>
<evidence type="ECO:0000250" key="1"/>
<evidence type="ECO:0000255" key="2"/>
<evidence type="ECO:0000269" key="3">
    <source>
    </source>
</evidence>
<evidence type="ECO:0000305" key="4"/>
<evidence type="ECO:0007744" key="5">
    <source>
    </source>
</evidence>
<evidence type="ECO:0007744" key="6">
    <source>
    </source>
</evidence>
<accession>P13586</accession>
<accession>D6VTY5</accession>
<reference key="1">
    <citation type="journal article" date="1989" name="Cell">
        <title>The yeast secretory pathway is perturbed by mutations in PMR1, a member of a Ca2+ ATPase family.</title>
        <authorList>
            <person name="Rudolph H.K."/>
            <person name="Antebi A."/>
            <person name="Fink G.R."/>
            <person name="Buckley C.M."/>
            <person name="Dorman T.E."/>
            <person name="Levitre J."/>
            <person name="Davidow L.S."/>
            <person name="Mao J.-I."/>
            <person name="Moir D.T."/>
        </authorList>
    </citation>
    <scope>NUCLEOTIDE SEQUENCE [GENOMIC DNA]</scope>
</reference>
<reference key="2">
    <citation type="journal article" date="1996" name="Yeast">
        <title>A putative helicase, the SUA5, PMR1, tRNALys1 genes and four open reading frames have been detected in the DNA sequence of an 8.8 kb fragment of the left arm of chromosome VII of Saccharomyces cerevisiae.</title>
        <authorList>
            <person name="Klima R."/>
            <person name="Coglievina M."/>
            <person name="Zaccaria P."/>
            <person name="Bertani I."/>
            <person name="Bruschi C.V."/>
        </authorList>
    </citation>
    <scope>NUCLEOTIDE SEQUENCE [GENOMIC DNA]</scope>
    <source>
        <strain>ATCC 96604 / S288c / FY1679</strain>
    </source>
</reference>
<reference key="3">
    <citation type="journal article" date="1997" name="Nature">
        <title>The nucleotide sequence of Saccharomyces cerevisiae chromosome VII.</title>
        <authorList>
            <person name="Tettelin H."/>
            <person name="Agostoni-Carbone M.L."/>
            <person name="Albermann K."/>
            <person name="Albers M."/>
            <person name="Arroyo J."/>
            <person name="Backes U."/>
            <person name="Barreiros T."/>
            <person name="Bertani I."/>
            <person name="Bjourson A.J."/>
            <person name="Brueckner M."/>
            <person name="Bruschi C.V."/>
            <person name="Carignani G."/>
            <person name="Castagnoli L."/>
            <person name="Cerdan E."/>
            <person name="Clemente M.L."/>
            <person name="Coblenz A."/>
            <person name="Coglievina M."/>
            <person name="Coissac E."/>
            <person name="Defoor E."/>
            <person name="Del Bino S."/>
            <person name="Delius H."/>
            <person name="Delneri D."/>
            <person name="de Wergifosse P."/>
            <person name="Dujon B."/>
            <person name="Durand P."/>
            <person name="Entian K.-D."/>
            <person name="Eraso P."/>
            <person name="Escribano V."/>
            <person name="Fabiani L."/>
            <person name="Fartmann B."/>
            <person name="Feroli F."/>
            <person name="Feuermann M."/>
            <person name="Frontali L."/>
            <person name="Garcia-Gonzalez M."/>
            <person name="Garcia-Saez M.I."/>
            <person name="Goffeau A."/>
            <person name="Guerreiro P."/>
            <person name="Hani J."/>
            <person name="Hansen M."/>
            <person name="Hebling U."/>
            <person name="Hernandez K."/>
            <person name="Heumann K."/>
            <person name="Hilger F."/>
            <person name="Hofmann B."/>
            <person name="Indge K.J."/>
            <person name="James C.M."/>
            <person name="Klima R."/>
            <person name="Koetter P."/>
            <person name="Kramer B."/>
            <person name="Kramer W."/>
            <person name="Lauquin G."/>
            <person name="Leuther H."/>
            <person name="Louis E.J."/>
            <person name="Maillier E."/>
            <person name="Marconi A."/>
            <person name="Martegani E."/>
            <person name="Mazon M.J."/>
            <person name="Mazzoni C."/>
            <person name="McReynolds A.D.K."/>
            <person name="Melchioretto P."/>
            <person name="Mewes H.-W."/>
            <person name="Minenkova O."/>
            <person name="Mueller-Auer S."/>
            <person name="Nawrocki A."/>
            <person name="Netter P."/>
            <person name="Neu R."/>
            <person name="Nombela C."/>
            <person name="Oliver S.G."/>
            <person name="Panzeri L."/>
            <person name="Paoluzi S."/>
            <person name="Plevani P."/>
            <person name="Portetelle D."/>
            <person name="Portillo F."/>
            <person name="Potier S."/>
            <person name="Purnelle B."/>
            <person name="Rieger M."/>
            <person name="Riles L."/>
            <person name="Rinaldi T."/>
            <person name="Robben J."/>
            <person name="Rodrigues-Pousada C."/>
            <person name="Rodriguez-Belmonte E."/>
            <person name="Rodriguez-Torres A.M."/>
            <person name="Rose M."/>
            <person name="Ruzzi M."/>
            <person name="Saliola M."/>
            <person name="Sanchez-Perez M."/>
            <person name="Schaefer B."/>
            <person name="Schaefer M."/>
            <person name="Scharfe M."/>
            <person name="Schmidheini T."/>
            <person name="Schreer A."/>
            <person name="Skala J."/>
            <person name="Souciet J.-L."/>
            <person name="Steensma H.Y."/>
            <person name="Talla E."/>
            <person name="Thierry A."/>
            <person name="Vandenbol M."/>
            <person name="van der Aart Q.J.M."/>
            <person name="Van Dyck L."/>
            <person name="Vanoni M."/>
            <person name="Verhasselt P."/>
            <person name="Voet M."/>
            <person name="Volckaert G."/>
            <person name="Wambutt R."/>
            <person name="Watson M.D."/>
            <person name="Weber N."/>
            <person name="Wedler E."/>
            <person name="Wedler H."/>
            <person name="Wipfli P."/>
            <person name="Wolf K."/>
            <person name="Wright L.F."/>
            <person name="Zaccaria P."/>
            <person name="Zimmermann M."/>
            <person name="Zollner A."/>
            <person name="Kleine K."/>
        </authorList>
    </citation>
    <scope>NUCLEOTIDE SEQUENCE [LARGE SCALE GENOMIC DNA]</scope>
    <source>
        <strain>ATCC 204508 / S288c</strain>
    </source>
</reference>
<reference key="4">
    <citation type="journal article" date="2014" name="G3 (Bethesda)">
        <title>The reference genome sequence of Saccharomyces cerevisiae: Then and now.</title>
        <authorList>
            <person name="Engel S.R."/>
            <person name="Dietrich F.S."/>
            <person name="Fisk D.G."/>
            <person name="Binkley G."/>
            <person name="Balakrishnan R."/>
            <person name="Costanzo M.C."/>
            <person name="Dwight S.S."/>
            <person name="Hitz B.C."/>
            <person name="Karra K."/>
            <person name="Nash R.S."/>
            <person name="Weng S."/>
            <person name="Wong E.D."/>
            <person name="Lloyd P."/>
            <person name="Skrzypek M.S."/>
            <person name="Miyasato S.R."/>
            <person name="Simison M."/>
            <person name="Cherry J.M."/>
        </authorList>
    </citation>
    <scope>GENOME REANNOTATION</scope>
    <source>
        <strain>ATCC 204508 / S288c</strain>
    </source>
</reference>
<reference key="5">
    <citation type="journal article" date="1992" name="Genetics">
        <title>Isolation and characterization of SUA5, a novel gene required for normal growth in Saccharomyces cerevisiae.</title>
        <authorList>
            <person name="Na J.G."/>
            <person name="Pinto I."/>
            <person name="Hampsey M."/>
        </authorList>
    </citation>
    <scope>NUCLEOTIDE SEQUENCE [GENOMIC DNA] OF 863-950</scope>
</reference>
<reference key="6">
    <citation type="journal article" date="2003" name="Nature">
        <title>Global analysis of protein expression in yeast.</title>
        <authorList>
            <person name="Ghaemmaghami S."/>
            <person name="Huh W.-K."/>
            <person name="Bower K."/>
            <person name="Howson R.W."/>
            <person name="Belle A."/>
            <person name="Dephoure N."/>
            <person name="O'Shea E.K."/>
            <person name="Weissman J.S."/>
        </authorList>
    </citation>
    <scope>LEVEL OF PROTEIN EXPRESSION [LARGE SCALE ANALYSIS]</scope>
</reference>
<reference key="7">
    <citation type="journal article" date="2006" name="Proc. Natl. Acad. Sci. U.S.A.">
        <title>A global topology map of the Saccharomyces cerevisiae membrane proteome.</title>
        <authorList>
            <person name="Kim H."/>
            <person name="Melen K."/>
            <person name="Oesterberg M."/>
            <person name="von Heijne G."/>
        </authorList>
    </citation>
    <scope>TOPOLOGY [LARGE SCALE ANALYSIS]</scope>
    <source>
        <strain>ATCC 208353 / W303-1A</strain>
    </source>
</reference>
<reference key="8">
    <citation type="journal article" date="2009" name="Science">
        <title>Global analysis of Cdk1 substrate phosphorylation sites provides insights into evolution.</title>
        <authorList>
            <person name="Holt L.J."/>
            <person name="Tuch B.B."/>
            <person name="Villen J."/>
            <person name="Johnson A.D."/>
            <person name="Gygi S.P."/>
            <person name="Morgan D.O."/>
        </authorList>
    </citation>
    <scope>PHOSPHORYLATION [LARGE SCALE ANALYSIS] AT SER-227</scope>
    <scope>IDENTIFICATION BY MASS SPECTROMETRY [LARGE SCALE ANALYSIS]</scope>
</reference>
<reference key="9">
    <citation type="journal article" date="2012" name="Proc. Natl. Acad. Sci. U.S.A.">
        <title>N-terminal acetylome analyses and functional insights of the N-terminal acetyltransferase NatB.</title>
        <authorList>
            <person name="Van Damme P."/>
            <person name="Lasa M."/>
            <person name="Polevoda B."/>
            <person name="Gazquez C."/>
            <person name="Elosegui-Artola A."/>
            <person name="Kim D.S."/>
            <person name="De Juan-Pardo E."/>
            <person name="Demeyer K."/>
            <person name="Hole K."/>
            <person name="Larrea E."/>
            <person name="Timmerman E."/>
            <person name="Prieto J."/>
            <person name="Arnesen T."/>
            <person name="Sherman F."/>
            <person name="Gevaert K."/>
            <person name="Aldabe R."/>
        </authorList>
    </citation>
    <scope>ACETYLATION [LARGE SCALE ANALYSIS] AT SER-2</scope>
    <scope>CLEAVAGE OF INITIATOR METHIONINE [LARGE SCALE ANALYSIS]</scope>
    <scope>IDENTIFICATION BY MASS SPECTROMETRY [LARGE SCALE ANALYSIS]</scope>
</reference>
<proteinExistence type="evidence at protein level"/>
<comment type="function">
    <text>This magnesium-dependent enzyme catalyzes the hydrolysis of ATP coupled with the transport of calcium. Has a role in the secretory pathway.</text>
</comment>
<comment type="catalytic activity">
    <reaction>
        <text>Ca(2+)(in) + ATP + H2O = Ca(2+)(out) + ADP + phosphate + H(+)</text>
        <dbReference type="Rhea" id="RHEA:18105"/>
        <dbReference type="ChEBI" id="CHEBI:15377"/>
        <dbReference type="ChEBI" id="CHEBI:15378"/>
        <dbReference type="ChEBI" id="CHEBI:29108"/>
        <dbReference type="ChEBI" id="CHEBI:30616"/>
        <dbReference type="ChEBI" id="CHEBI:43474"/>
        <dbReference type="ChEBI" id="CHEBI:456216"/>
        <dbReference type="EC" id="7.2.2.10"/>
    </reaction>
</comment>
<comment type="subcellular location">
    <subcellularLocation>
        <location>Golgi apparatus membrane</location>
        <topology>Multi-pass membrane protein</topology>
    </subcellularLocation>
</comment>
<comment type="miscellaneous">
    <text evidence="3">Present with 6900 molecules/cell in log phase SD medium.</text>
</comment>
<comment type="similarity">
    <text evidence="4">Belongs to the cation transport ATPase (P-type) (TC 3.A.3) family.</text>
</comment>
<dbReference type="EC" id="7.2.2.10"/>
<dbReference type="EMBL" id="M25488">
    <property type="protein sequence ID" value="AAA34884.1"/>
    <property type="molecule type" value="Genomic_DNA"/>
</dbReference>
<dbReference type="EMBL" id="X85757">
    <property type="protein sequence ID" value="CAA59762.1"/>
    <property type="molecule type" value="Genomic_DNA"/>
</dbReference>
<dbReference type="EMBL" id="Z72690">
    <property type="protein sequence ID" value="CAA96880.1"/>
    <property type="molecule type" value="Genomic_DNA"/>
</dbReference>
<dbReference type="EMBL" id="X64319">
    <property type="protein sequence ID" value="CAA45599.1"/>
    <property type="molecule type" value="Genomic_DNA"/>
</dbReference>
<dbReference type="EMBL" id="BK006941">
    <property type="protein sequence ID" value="DAA07946.1"/>
    <property type="molecule type" value="Genomic_DNA"/>
</dbReference>
<dbReference type="PIR" id="A30990">
    <property type="entry name" value="PWBYR1"/>
</dbReference>
<dbReference type="RefSeq" id="NP_011348.1">
    <property type="nucleotide sequence ID" value="NM_001181032.1"/>
</dbReference>
<dbReference type="SMR" id="P13586"/>
<dbReference type="BioGRID" id="33087">
    <property type="interactions" value="873"/>
</dbReference>
<dbReference type="DIP" id="DIP-7899N"/>
<dbReference type="FunCoup" id="P13586">
    <property type="interactions" value="532"/>
</dbReference>
<dbReference type="IntAct" id="P13586">
    <property type="interactions" value="56"/>
</dbReference>
<dbReference type="MINT" id="P13586"/>
<dbReference type="STRING" id="4932.YGL167C"/>
<dbReference type="TCDB" id="3.A.3.2.3">
    <property type="family name" value="the p-type atpase (p-atpase) superfamily"/>
</dbReference>
<dbReference type="GlyGen" id="P13586">
    <property type="glycosylation" value="1 site, 1 O-linked glycan (1 site)"/>
</dbReference>
<dbReference type="iPTMnet" id="P13586"/>
<dbReference type="PaxDb" id="4932-YGL167C"/>
<dbReference type="PeptideAtlas" id="P13586"/>
<dbReference type="EnsemblFungi" id="YGL167C_mRNA">
    <property type="protein sequence ID" value="YGL167C"/>
    <property type="gene ID" value="YGL167C"/>
</dbReference>
<dbReference type="GeneID" id="852709"/>
<dbReference type="KEGG" id="sce:YGL167C"/>
<dbReference type="AGR" id="SGD:S000003135"/>
<dbReference type="SGD" id="S000003135">
    <property type="gene designation" value="PMR1"/>
</dbReference>
<dbReference type="VEuPathDB" id="FungiDB:YGL167C"/>
<dbReference type="eggNOG" id="KOG0202">
    <property type="taxonomic scope" value="Eukaryota"/>
</dbReference>
<dbReference type="GeneTree" id="ENSGT00940000168572"/>
<dbReference type="HOGENOM" id="CLU_002360_3_0_1"/>
<dbReference type="InParanoid" id="P13586"/>
<dbReference type="OMA" id="KMHACET"/>
<dbReference type="OrthoDB" id="3352408at2759"/>
<dbReference type="BioCyc" id="YEAST:G3O-30655-MONOMER"/>
<dbReference type="BRENDA" id="7.2.2.10">
    <property type="organism ID" value="984"/>
</dbReference>
<dbReference type="BRENDA" id="7.2.2.22">
    <property type="organism ID" value="984"/>
</dbReference>
<dbReference type="Reactome" id="R-SCE-936837">
    <property type="pathway name" value="Ion transport by P-type ATPases"/>
</dbReference>
<dbReference type="BioGRID-ORCS" id="852709">
    <property type="hits" value="3 hits in 10 CRISPR screens"/>
</dbReference>
<dbReference type="PRO" id="PR:P13586"/>
<dbReference type="Proteomes" id="UP000002311">
    <property type="component" value="Chromosome VII"/>
</dbReference>
<dbReference type="RNAct" id="P13586">
    <property type="molecule type" value="protein"/>
</dbReference>
<dbReference type="GO" id="GO:0005783">
    <property type="term" value="C:endoplasmic reticulum"/>
    <property type="evidence" value="ECO:0000318"/>
    <property type="project" value="GO_Central"/>
</dbReference>
<dbReference type="GO" id="GO:0005794">
    <property type="term" value="C:Golgi apparatus"/>
    <property type="evidence" value="ECO:0000314"/>
    <property type="project" value="UniProtKB"/>
</dbReference>
<dbReference type="GO" id="GO:0000139">
    <property type="term" value="C:Golgi membrane"/>
    <property type="evidence" value="ECO:0000314"/>
    <property type="project" value="SGD"/>
</dbReference>
<dbReference type="GO" id="GO:0005886">
    <property type="term" value="C:plasma membrane"/>
    <property type="evidence" value="ECO:0000318"/>
    <property type="project" value="GO_Central"/>
</dbReference>
<dbReference type="GO" id="GO:0005524">
    <property type="term" value="F:ATP binding"/>
    <property type="evidence" value="ECO:0007669"/>
    <property type="project" value="UniProtKB-KW"/>
</dbReference>
<dbReference type="GO" id="GO:0016887">
    <property type="term" value="F:ATP hydrolysis activity"/>
    <property type="evidence" value="ECO:0007669"/>
    <property type="project" value="InterPro"/>
</dbReference>
<dbReference type="GO" id="GO:0005509">
    <property type="term" value="F:calcium ion binding"/>
    <property type="evidence" value="ECO:0000314"/>
    <property type="project" value="SGD"/>
</dbReference>
<dbReference type="GO" id="GO:0005388">
    <property type="term" value="F:P-type calcium transporter activity"/>
    <property type="evidence" value="ECO:0000314"/>
    <property type="project" value="SGD"/>
</dbReference>
<dbReference type="GO" id="GO:0140613">
    <property type="term" value="F:P-type manganese transporter activity"/>
    <property type="evidence" value="ECO:0000314"/>
    <property type="project" value="SGD"/>
</dbReference>
<dbReference type="GO" id="GO:0070588">
    <property type="term" value="P:calcium ion transmembrane transport"/>
    <property type="evidence" value="ECO:0000318"/>
    <property type="project" value="GO_Central"/>
</dbReference>
<dbReference type="GO" id="GO:0006816">
    <property type="term" value="P:calcium ion transport"/>
    <property type="evidence" value="ECO:0000314"/>
    <property type="project" value="SGD"/>
</dbReference>
<dbReference type="GO" id="GO:0006874">
    <property type="term" value="P:intracellular calcium ion homeostasis"/>
    <property type="evidence" value="ECO:0000315"/>
    <property type="project" value="UniProtKB"/>
</dbReference>
<dbReference type="GO" id="GO:0030026">
    <property type="term" value="P:intracellular manganese ion homeostasis"/>
    <property type="evidence" value="ECO:0000315"/>
    <property type="project" value="SGD"/>
</dbReference>
<dbReference type="GO" id="GO:0016236">
    <property type="term" value="P:macroautophagy"/>
    <property type="evidence" value="ECO:0000315"/>
    <property type="project" value="SGD"/>
</dbReference>
<dbReference type="GO" id="GO:0006828">
    <property type="term" value="P:manganese ion transport"/>
    <property type="evidence" value="ECO:0000314"/>
    <property type="project" value="SGD"/>
</dbReference>
<dbReference type="CDD" id="cd02085">
    <property type="entry name" value="P-type_ATPase_SPCA"/>
    <property type="match status" value="1"/>
</dbReference>
<dbReference type="FunFam" id="2.70.150.10:FF:000008">
    <property type="entry name" value="Calcium-transporting ATPase"/>
    <property type="match status" value="1"/>
</dbReference>
<dbReference type="FunFam" id="3.40.1110.10:FF:000040">
    <property type="entry name" value="Calcium-transporting ATPase 1"/>
    <property type="match status" value="1"/>
</dbReference>
<dbReference type="FunFam" id="3.40.50.1000:FF:000028">
    <property type="entry name" value="Calcium-transporting P-type ATPase, putative"/>
    <property type="match status" value="1"/>
</dbReference>
<dbReference type="FunFam" id="3.40.50.1000:FF:000001">
    <property type="entry name" value="Phospholipid-transporting ATPase IC"/>
    <property type="match status" value="1"/>
</dbReference>
<dbReference type="Gene3D" id="3.40.1110.10">
    <property type="entry name" value="Calcium-transporting ATPase, cytoplasmic domain N"/>
    <property type="match status" value="1"/>
</dbReference>
<dbReference type="Gene3D" id="2.70.150.10">
    <property type="entry name" value="Calcium-transporting ATPase, cytoplasmic transduction domain A"/>
    <property type="match status" value="1"/>
</dbReference>
<dbReference type="Gene3D" id="1.20.1110.10">
    <property type="entry name" value="Calcium-transporting ATPase, transmembrane domain"/>
    <property type="match status" value="1"/>
</dbReference>
<dbReference type="Gene3D" id="3.40.50.1000">
    <property type="entry name" value="HAD superfamily/HAD-like"/>
    <property type="match status" value="1"/>
</dbReference>
<dbReference type="InterPro" id="IPR006068">
    <property type="entry name" value="ATPase_P-typ_cation-transptr_C"/>
</dbReference>
<dbReference type="InterPro" id="IPR004014">
    <property type="entry name" value="ATPase_P-typ_cation-transptr_N"/>
</dbReference>
<dbReference type="InterPro" id="IPR023299">
    <property type="entry name" value="ATPase_P-typ_cyto_dom_N"/>
</dbReference>
<dbReference type="InterPro" id="IPR018303">
    <property type="entry name" value="ATPase_P-typ_P_site"/>
</dbReference>
<dbReference type="InterPro" id="IPR023298">
    <property type="entry name" value="ATPase_P-typ_TM_dom_sf"/>
</dbReference>
<dbReference type="InterPro" id="IPR008250">
    <property type="entry name" value="ATPase_P-typ_transduc_dom_A_sf"/>
</dbReference>
<dbReference type="InterPro" id="IPR036412">
    <property type="entry name" value="HAD-like_sf"/>
</dbReference>
<dbReference type="InterPro" id="IPR023214">
    <property type="entry name" value="HAD_sf"/>
</dbReference>
<dbReference type="InterPro" id="IPR006413">
    <property type="entry name" value="P-type_ATPase_IIA_PMR1"/>
</dbReference>
<dbReference type="InterPro" id="IPR001757">
    <property type="entry name" value="P_typ_ATPase"/>
</dbReference>
<dbReference type="InterPro" id="IPR044492">
    <property type="entry name" value="P_typ_ATPase_HD_dom"/>
</dbReference>
<dbReference type="NCBIfam" id="TIGR01522">
    <property type="entry name" value="ATPase-IIA2_Ca"/>
    <property type="match status" value="1"/>
</dbReference>
<dbReference type="NCBIfam" id="TIGR01494">
    <property type="entry name" value="ATPase_P-type"/>
    <property type="match status" value="2"/>
</dbReference>
<dbReference type="PANTHER" id="PTHR42861">
    <property type="entry name" value="CALCIUM-TRANSPORTING ATPASE"/>
    <property type="match status" value="1"/>
</dbReference>
<dbReference type="Pfam" id="PF13246">
    <property type="entry name" value="Cation_ATPase"/>
    <property type="match status" value="1"/>
</dbReference>
<dbReference type="Pfam" id="PF00689">
    <property type="entry name" value="Cation_ATPase_C"/>
    <property type="match status" value="1"/>
</dbReference>
<dbReference type="Pfam" id="PF00690">
    <property type="entry name" value="Cation_ATPase_N"/>
    <property type="match status" value="1"/>
</dbReference>
<dbReference type="Pfam" id="PF00122">
    <property type="entry name" value="E1-E2_ATPase"/>
    <property type="match status" value="1"/>
</dbReference>
<dbReference type="Pfam" id="PF00702">
    <property type="entry name" value="Hydrolase"/>
    <property type="match status" value="1"/>
</dbReference>
<dbReference type="PRINTS" id="PR00119">
    <property type="entry name" value="CATATPASE"/>
</dbReference>
<dbReference type="PRINTS" id="PR00120">
    <property type="entry name" value="HATPASE"/>
</dbReference>
<dbReference type="SFLD" id="SFLDG00002">
    <property type="entry name" value="C1.7:_P-type_atpase_like"/>
    <property type="match status" value="1"/>
</dbReference>
<dbReference type="SFLD" id="SFLDF00027">
    <property type="entry name" value="p-type_atpase"/>
    <property type="match status" value="1"/>
</dbReference>
<dbReference type="SMART" id="SM00831">
    <property type="entry name" value="Cation_ATPase_N"/>
    <property type="match status" value="1"/>
</dbReference>
<dbReference type="SUPFAM" id="SSF81653">
    <property type="entry name" value="Calcium ATPase, transduction domain A"/>
    <property type="match status" value="1"/>
</dbReference>
<dbReference type="SUPFAM" id="SSF81665">
    <property type="entry name" value="Calcium ATPase, transmembrane domain M"/>
    <property type="match status" value="1"/>
</dbReference>
<dbReference type="SUPFAM" id="SSF56784">
    <property type="entry name" value="HAD-like"/>
    <property type="match status" value="1"/>
</dbReference>
<dbReference type="SUPFAM" id="SSF81660">
    <property type="entry name" value="Metal cation-transporting ATPase, ATP-binding domain N"/>
    <property type="match status" value="1"/>
</dbReference>
<dbReference type="PROSITE" id="PS00154">
    <property type="entry name" value="ATPASE_E1_E2"/>
    <property type="match status" value="1"/>
</dbReference>